<name>ACON_CAEEL</name>
<sequence>MNSLLRLSHLAGPAHYRALHSSSSIWSKVAISKFEPKSYLPYEKLSQTVKIVKDRLKRPLTLSEKILYGHLDQPKTQDIERGVSYLRLRPDRVAMQDATAQMAMLQFISSGLPKTAVPSTIHCDHLIEAQKGGAQDLARAKDLNKEVFNFLATAGSKYGVGFWKPGSGIIHQIILENYAFPGLLLIGTDSHTPNGGGLGGLCIGVGGADAVDVMADIPWELKCPKVIGIKLTGKLNGWTSAKDVILKVADILTVKGGTGAIVEYFGPGVDSISATGMGTICNMGAEIGATTSVFPYNESMYKYLEATGRKEIAEEARKYKDLLTADDGANYDQIIEINLDTLTPHVNGPFTPDLASSIDKLGENAKKNGWPLDVKVSLIGSCTNSSYEDMTRAASIAKQALDKGLKAKTIFTITPGSEQVRATIERDGLSKIFADFGGMVLANACGPCIGQWDRQDVKKGEKNTIVTSYNRNFTGRNDANPATHGFVTSPDITTAMAISGRLDFNPLTDELTAADGSKFKLQAPTGLDLPPKGYDPGEDTFQAPSGSGQVDVSPSSDRLQLLSPFDKWDGKDLEDMKILIKVTGKCTTDHISAAGPWLKYRGHLDNISNNLFLTAINADNGEMNKVKNQVTGEYGAVPATARKYKADGVRWVAIGDENYGEGSSREHAALEPRHLGGRAIIVKSFARIHETNLKKQGMLPLTFANPADYDKIDPSDNVSIVGLSSFAPGKPLTAIFKKTNGSKVEVTLNHTFNEQQIEWFKAGSALNRMKEVFAKSK</sequence>
<evidence type="ECO:0000250" key="1"/>
<evidence type="ECO:0000255" key="2"/>
<evidence type="ECO:0000256" key="3">
    <source>
        <dbReference type="SAM" id="MobiDB-lite"/>
    </source>
</evidence>
<evidence type="ECO:0000269" key="4">
    <source>
    </source>
</evidence>
<evidence type="ECO:0000305" key="5"/>
<evidence type="ECO:0000312" key="6">
    <source>
        <dbReference type="WormBase" id="F54H12.1a"/>
    </source>
</evidence>
<evidence type="ECO:0000312" key="7">
    <source>
        <dbReference type="WormBase" id="F54H12.1c"/>
    </source>
</evidence>
<proteinExistence type="inferred from homology"/>
<gene>
    <name evidence="6" type="primary">aco-2</name>
    <name evidence="6" type="ORF">F54H12.1</name>
</gene>
<comment type="function">
    <text evidence="1">Catalyzes the isomerization of citrate to isocitrate via cis-aconitate.</text>
</comment>
<comment type="catalytic activity">
    <reaction>
        <text>citrate = D-threo-isocitrate</text>
        <dbReference type="Rhea" id="RHEA:10336"/>
        <dbReference type="ChEBI" id="CHEBI:15562"/>
        <dbReference type="ChEBI" id="CHEBI:16947"/>
        <dbReference type="EC" id="4.2.1.3"/>
    </reaction>
</comment>
<comment type="cofactor">
    <cofactor evidence="1">
        <name>[4Fe-4S] cluster</name>
        <dbReference type="ChEBI" id="CHEBI:49883"/>
    </cofactor>
    <text evidence="1">Binds 1 [4Fe-4S] cluster per subunit.</text>
</comment>
<comment type="pathway">
    <text>Carbohydrate metabolism; tricarboxylic acid cycle; isocitrate from oxaloacetate: step 2/2.</text>
</comment>
<comment type="subunit">
    <text evidence="1">Monomer.</text>
</comment>
<comment type="subcellular location">
    <subcellularLocation>
        <location evidence="1">Mitochondrion</location>
    </subcellularLocation>
</comment>
<comment type="alternative products">
    <event type="alternative splicing"/>
    <isoform>
        <id>P34455-1</id>
        <name evidence="6">a</name>
        <sequence type="displayed"/>
    </isoform>
    <isoform>
        <id>P34455-3</id>
        <name evidence="7">c</name>
        <sequence type="described" ref="VSP_016115"/>
    </isoform>
</comment>
<comment type="disruption phenotype">
    <text evidence="4">RNAi-mediated knockdown causes accumulation of citrate, leading to induction of the citrate-induced mitochondrial unfolded protein response (mtUPR).</text>
</comment>
<comment type="similarity">
    <text evidence="5">Belongs to the aconitase/IPM isomerase family.</text>
</comment>
<protein>
    <recommendedName>
        <fullName>Probable aconitate hydratase, mitochondrial</fullName>
        <shortName>Aconitase</shortName>
        <ecNumber>4.2.1.3</ecNumber>
    </recommendedName>
    <alternativeName>
        <fullName>Citrate hydro-lyase</fullName>
    </alternativeName>
</protein>
<dbReference type="EC" id="4.2.1.3"/>
<dbReference type="EMBL" id="BX284603">
    <property type="protein sequence ID" value="CCD63454.1"/>
    <property type="molecule type" value="Genomic_DNA"/>
</dbReference>
<dbReference type="EMBL" id="BX284603">
    <property type="protein sequence ID" value="CCD63456.1"/>
    <property type="molecule type" value="Genomic_DNA"/>
</dbReference>
<dbReference type="PIR" id="S44831">
    <property type="entry name" value="S44831"/>
</dbReference>
<dbReference type="RefSeq" id="NP_498738.2">
    <molecule id="P34455-3"/>
    <property type="nucleotide sequence ID" value="NM_066337.5"/>
</dbReference>
<dbReference type="RefSeq" id="NP_741235.1">
    <molecule id="P34455-1"/>
    <property type="nucleotide sequence ID" value="NM_171200.5"/>
</dbReference>
<dbReference type="SMR" id="P34455"/>
<dbReference type="BioGRID" id="41327">
    <property type="interactions" value="60"/>
</dbReference>
<dbReference type="FunCoup" id="P34455">
    <property type="interactions" value="1761"/>
</dbReference>
<dbReference type="STRING" id="6239.F54H12.1a.1"/>
<dbReference type="PaxDb" id="6239-F54H12.1a"/>
<dbReference type="PeptideAtlas" id="P34455"/>
<dbReference type="EnsemblMetazoa" id="F54H12.1a.1">
    <molecule id="P34455-1"/>
    <property type="protein sequence ID" value="F54H12.1a.1"/>
    <property type="gene ID" value="WBGene00000041"/>
</dbReference>
<dbReference type="EnsemblMetazoa" id="F54H12.1c.1">
    <molecule id="P34455-3"/>
    <property type="protein sequence ID" value="F54H12.1c.1"/>
    <property type="gene ID" value="WBGene00000041"/>
</dbReference>
<dbReference type="EnsemblMetazoa" id="F54H12.1c.2">
    <molecule id="P34455-3"/>
    <property type="protein sequence ID" value="F54H12.1c.2"/>
    <property type="gene ID" value="WBGene00000041"/>
</dbReference>
<dbReference type="EnsemblMetazoa" id="F54H12.1c.3">
    <molecule id="P34455-3"/>
    <property type="protein sequence ID" value="F54H12.1c.3"/>
    <property type="gene ID" value="WBGene00000041"/>
</dbReference>
<dbReference type="GeneID" id="176121"/>
<dbReference type="KEGG" id="cel:CELE_F54H12.1"/>
<dbReference type="UCSC" id="F54H12.1c.2">
    <molecule id="P34455-1"/>
    <property type="organism name" value="c. elegans"/>
</dbReference>
<dbReference type="AGR" id="WB:WBGene00000041"/>
<dbReference type="CTD" id="176121"/>
<dbReference type="WormBase" id="F54H12.1a">
    <molecule id="P34455-1"/>
    <property type="protein sequence ID" value="CE25005"/>
    <property type="gene ID" value="WBGene00000041"/>
    <property type="gene designation" value="aco-2"/>
</dbReference>
<dbReference type="WormBase" id="F54H12.1c">
    <molecule id="P34455-3"/>
    <property type="protein sequence ID" value="CE32436"/>
    <property type="gene ID" value="WBGene00000041"/>
    <property type="gene designation" value="aco-2"/>
</dbReference>
<dbReference type="eggNOG" id="KOG0453">
    <property type="taxonomic scope" value="Eukaryota"/>
</dbReference>
<dbReference type="GeneTree" id="ENSGT00940000154892"/>
<dbReference type="InParanoid" id="P34455"/>
<dbReference type="OMA" id="KKQGMLG"/>
<dbReference type="OrthoDB" id="2224430at2759"/>
<dbReference type="PhylomeDB" id="P34455"/>
<dbReference type="Reactome" id="R-CEL-71403">
    <property type="pathway name" value="Citric acid cycle (TCA cycle)"/>
</dbReference>
<dbReference type="Reactome" id="R-CEL-9837999">
    <property type="pathway name" value="Mitochondrial protein degradation"/>
</dbReference>
<dbReference type="Reactome" id="R-CEL-9854311">
    <property type="pathway name" value="Maturation of TCA enzymes and regulation of TCA cycle"/>
</dbReference>
<dbReference type="UniPathway" id="UPA00223">
    <property type="reaction ID" value="UER00718"/>
</dbReference>
<dbReference type="PRO" id="PR:P34455"/>
<dbReference type="Proteomes" id="UP000001940">
    <property type="component" value="Chromosome III"/>
</dbReference>
<dbReference type="Bgee" id="WBGene00000041">
    <property type="expression patterns" value="Expressed in adult organism and 4 other cell types or tissues"/>
</dbReference>
<dbReference type="GO" id="GO:0005829">
    <property type="term" value="C:cytosol"/>
    <property type="evidence" value="ECO:0000318"/>
    <property type="project" value="GO_Central"/>
</dbReference>
<dbReference type="GO" id="GO:0005739">
    <property type="term" value="C:mitochondrion"/>
    <property type="evidence" value="ECO:0007005"/>
    <property type="project" value="WormBase"/>
</dbReference>
<dbReference type="GO" id="GO:0051539">
    <property type="term" value="F:4 iron, 4 sulfur cluster binding"/>
    <property type="evidence" value="ECO:0000318"/>
    <property type="project" value="GO_Central"/>
</dbReference>
<dbReference type="GO" id="GO:0003994">
    <property type="term" value="F:aconitate hydratase activity"/>
    <property type="evidence" value="ECO:0000318"/>
    <property type="project" value="GO_Central"/>
</dbReference>
<dbReference type="GO" id="GO:0046872">
    <property type="term" value="F:metal ion binding"/>
    <property type="evidence" value="ECO:0007669"/>
    <property type="project" value="UniProtKB-KW"/>
</dbReference>
<dbReference type="GO" id="GO:0006099">
    <property type="term" value="P:tricarboxylic acid cycle"/>
    <property type="evidence" value="ECO:0000318"/>
    <property type="project" value="GO_Central"/>
</dbReference>
<dbReference type="CDD" id="cd01578">
    <property type="entry name" value="AcnA_Mitochon_Swivel"/>
    <property type="match status" value="1"/>
</dbReference>
<dbReference type="CDD" id="cd01584">
    <property type="entry name" value="AcnA_Mitochondrial"/>
    <property type="match status" value="1"/>
</dbReference>
<dbReference type="FunFam" id="3.20.19.10:FF:000002">
    <property type="entry name" value="Aconitate hydratase, mitochondrial"/>
    <property type="match status" value="1"/>
</dbReference>
<dbReference type="FunFam" id="3.30.499.10:FF:000003">
    <property type="entry name" value="Aconitate hydratase, mitochondrial"/>
    <property type="match status" value="1"/>
</dbReference>
<dbReference type="FunFam" id="3.30.499.10:FF:000004">
    <property type="entry name" value="Aconitate hydratase, mitochondrial"/>
    <property type="match status" value="1"/>
</dbReference>
<dbReference type="FunFam" id="3.40.1060.10:FF:000001">
    <property type="entry name" value="Aconitate hydratase, mitochondrial"/>
    <property type="match status" value="1"/>
</dbReference>
<dbReference type="Gene3D" id="3.40.1060.10">
    <property type="entry name" value="Aconitase, Domain 2"/>
    <property type="match status" value="1"/>
</dbReference>
<dbReference type="Gene3D" id="3.30.499.10">
    <property type="entry name" value="Aconitase, domain 3"/>
    <property type="match status" value="2"/>
</dbReference>
<dbReference type="Gene3D" id="3.20.19.10">
    <property type="entry name" value="Aconitase, domain 4"/>
    <property type="match status" value="1"/>
</dbReference>
<dbReference type="InterPro" id="IPR015931">
    <property type="entry name" value="Acnase/IPM_dHydase_lsu_aba_1/3"/>
</dbReference>
<dbReference type="InterPro" id="IPR001030">
    <property type="entry name" value="Acoase/IPM_deHydtase_lsu_aba"/>
</dbReference>
<dbReference type="InterPro" id="IPR015928">
    <property type="entry name" value="Aconitase/3IPM_dehydase_swvl"/>
</dbReference>
<dbReference type="InterPro" id="IPR050926">
    <property type="entry name" value="Aconitase/IPM_isomerase"/>
</dbReference>
<dbReference type="InterPro" id="IPR018136">
    <property type="entry name" value="Aconitase_4Fe-4S_BS"/>
</dbReference>
<dbReference type="InterPro" id="IPR036008">
    <property type="entry name" value="Aconitase_4Fe-4S_dom"/>
</dbReference>
<dbReference type="InterPro" id="IPR015932">
    <property type="entry name" value="Aconitase_dom2"/>
</dbReference>
<dbReference type="InterPro" id="IPR006248">
    <property type="entry name" value="Aconitase_mito-like"/>
</dbReference>
<dbReference type="InterPro" id="IPR000573">
    <property type="entry name" value="AconitaseA/IPMdHydase_ssu_swvl"/>
</dbReference>
<dbReference type="NCBIfam" id="TIGR01340">
    <property type="entry name" value="aconitase_mito"/>
    <property type="match status" value="1"/>
</dbReference>
<dbReference type="NCBIfam" id="NF005558">
    <property type="entry name" value="PRK07229.1"/>
    <property type="match status" value="1"/>
</dbReference>
<dbReference type="PANTHER" id="PTHR43160">
    <property type="entry name" value="ACONITATE HYDRATASE B"/>
    <property type="match status" value="1"/>
</dbReference>
<dbReference type="PANTHER" id="PTHR43160:SF3">
    <property type="entry name" value="ACONITATE HYDRATASE, MITOCHONDRIAL"/>
    <property type="match status" value="1"/>
</dbReference>
<dbReference type="Pfam" id="PF00330">
    <property type="entry name" value="Aconitase"/>
    <property type="match status" value="1"/>
</dbReference>
<dbReference type="Pfam" id="PF00694">
    <property type="entry name" value="Aconitase_C"/>
    <property type="match status" value="1"/>
</dbReference>
<dbReference type="PRINTS" id="PR00415">
    <property type="entry name" value="ACONITASE"/>
</dbReference>
<dbReference type="SUPFAM" id="SSF53732">
    <property type="entry name" value="Aconitase iron-sulfur domain"/>
    <property type="match status" value="1"/>
</dbReference>
<dbReference type="SUPFAM" id="SSF52016">
    <property type="entry name" value="LeuD/IlvD-like"/>
    <property type="match status" value="1"/>
</dbReference>
<dbReference type="PROSITE" id="PS00450">
    <property type="entry name" value="ACONITASE_1"/>
    <property type="match status" value="1"/>
</dbReference>
<dbReference type="PROSITE" id="PS01244">
    <property type="entry name" value="ACONITASE_2"/>
    <property type="match status" value="1"/>
</dbReference>
<reference key="1">
    <citation type="journal article" date="1994" name="Nature">
        <title>2.2 Mb of contiguous nucleotide sequence from chromosome III of C. elegans.</title>
        <authorList>
            <person name="Wilson R."/>
            <person name="Ainscough R."/>
            <person name="Anderson K."/>
            <person name="Baynes C."/>
            <person name="Berks M."/>
            <person name="Bonfield J."/>
            <person name="Burton J."/>
            <person name="Connell M."/>
            <person name="Copsey T."/>
            <person name="Cooper J."/>
            <person name="Coulson A."/>
            <person name="Craxton M."/>
            <person name="Dear S."/>
            <person name="Du Z."/>
            <person name="Durbin R."/>
            <person name="Favello A."/>
            <person name="Fraser A."/>
            <person name="Fulton L."/>
            <person name="Gardner A."/>
            <person name="Green P."/>
            <person name="Hawkins T."/>
            <person name="Hillier L."/>
            <person name="Jier M."/>
            <person name="Johnston L."/>
            <person name="Jones M."/>
            <person name="Kershaw J."/>
            <person name="Kirsten J."/>
            <person name="Laisster N."/>
            <person name="Latreille P."/>
            <person name="Lightning J."/>
            <person name="Lloyd C."/>
            <person name="Mortimore B."/>
            <person name="O'Callaghan M."/>
            <person name="Parsons J."/>
            <person name="Percy C."/>
            <person name="Rifken L."/>
            <person name="Roopra A."/>
            <person name="Saunders D."/>
            <person name="Shownkeen R."/>
            <person name="Sims M."/>
            <person name="Smaldon N."/>
            <person name="Smith A."/>
            <person name="Smith M."/>
            <person name="Sonnhammer E."/>
            <person name="Staden R."/>
            <person name="Sulston J."/>
            <person name="Thierry-Mieg J."/>
            <person name="Thomas K."/>
            <person name="Vaudin M."/>
            <person name="Vaughan K."/>
            <person name="Waterston R."/>
            <person name="Watson A."/>
            <person name="Weinstock L."/>
            <person name="Wilkinson-Sproat J."/>
            <person name="Wohldman P."/>
        </authorList>
    </citation>
    <scope>NUCLEOTIDE SEQUENCE [LARGE SCALE GENOMIC DNA]</scope>
    <source>
        <strain>Bristol N2</strain>
    </source>
</reference>
<reference key="2">
    <citation type="journal article" date="1998" name="Science">
        <title>Genome sequence of the nematode C. elegans: a platform for investigating biology.</title>
        <authorList>
            <consortium name="The C. elegans sequencing consortium"/>
        </authorList>
    </citation>
    <scope>NUCLEOTIDE SEQUENCE [LARGE SCALE GENOMIC DNA]</scope>
    <source>
        <strain>Bristol N2</strain>
    </source>
</reference>
<reference evidence="5" key="3">
    <citation type="journal article" date="2022" name="Cell Rep.">
        <title>NHR-80 senses the mitochondrial UPR to rewire citrate metabolism for lipid accumulation in Caenorhabditis elegans.</title>
        <authorList>
            <person name="Yang R."/>
            <person name="Li Y."/>
            <person name="Wang Y."/>
            <person name="Zhang J."/>
            <person name="Fan Q."/>
            <person name="Tan J."/>
            <person name="Li W."/>
            <person name="Zou X."/>
            <person name="Liang B."/>
        </authorList>
    </citation>
    <scope>DISRUPTION PHENOTYPE</scope>
</reference>
<keyword id="KW-0004">4Fe-4S</keyword>
<keyword id="KW-0025">Alternative splicing</keyword>
<keyword id="KW-0408">Iron</keyword>
<keyword id="KW-0411">Iron-sulfur</keyword>
<keyword id="KW-0456">Lyase</keyword>
<keyword id="KW-0479">Metal-binding</keyword>
<keyword id="KW-0496">Mitochondrion</keyword>
<keyword id="KW-1185">Reference proteome</keyword>
<keyword id="KW-0809">Transit peptide</keyword>
<keyword id="KW-0816">Tricarboxylic acid cycle</keyword>
<accession>P34455</accession>
<accession>Q8IG17</accession>
<accession>Q8WQF0</accession>
<organism>
    <name type="scientific">Caenorhabditis elegans</name>
    <dbReference type="NCBI Taxonomy" id="6239"/>
    <lineage>
        <taxon>Eukaryota</taxon>
        <taxon>Metazoa</taxon>
        <taxon>Ecdysozoa</taxon>
        <taxon>Nematoda</taxon>
        <taxon>Chromadorea</taxon>
        <taxon>Rhabditida</taxon>
        <taxon>Rhabditina</taxon>
        <taxon>Rhabditomorpha</taxon>
        <taxon>Rhabditoidea</taxon>
        <taxon>Rhabditidae</taxon>
        <taxon>Peloderinae</taxon>
        <taxon>Caenorhabditis</taxon>
    </lineage>
</organism>
<feature type="transit peptide" description="Mitochondrion" evidence="2">
    <location>
        <begin position="1"/>
        <end position="26"/>
    </location>
</feature>
<feature type="chain" id="PRO_0000000545" description="Probable aconitate hydratase, mitochondrial">
    <location>
        <begin position="27"/>
        <end position="777"/>
    </location>
</feature>
<feature type="region of interest" description="Disordered" evidence="3">
    <location>
        <begin position="534"/>
        <end position="555"/>
    </location>
</feature>
<feature type="compositionally biased region" description="Polar residues" evidence="3">
    <location>
        <begin position="542"/>
        <end position="555"/>
    </location>
</feature>
<feature type="binding site" evidence="1">
    <location>
        <position position="96"/>
    </location>
    <ligand>
        <name>substrate</name>
    </ligand>
</feature>
<feature type="binding site" evidence="1">
    <location>
        <begin position="189"/>
        <end position="191"/>
    </location>
    <ligand>
        <name>substrate</name>
    </ligand>
</feature>
<feature type="binding site" evidence="1">
    <location>
        <position position="382"/>
    </location>
    <ligand>
        <name>[4Fe-4S] cluster</name>
        <dbReference type="ChEBI" id="CHEBI:49883"/>
    </ligand>
</feature>
<feature type="binding site" evidence="1">
    <location>
        <position position="445"/>
    </location>
    <ligand>
        <name>[4Fe-4S] cluster</name>
        <dbReference type="ChEBI" id="CHEBI:49883"/>
    </ligand>
</feature>
<feature type="binding site" evidence="1">
    <location>
        <position position="448"/>
    </location>
    <ligand>
        <name>[4Fe-4S] cluster</name>
        <dbReference type="ChEBI" id="CHEBI:49883"/>
    </ligand>
</feature>
<feature type="binding site" evidence="1">
    <location>
        <position position="471"/>
    </location>
    <ligand>
        <name>substrate</name>
    </ligand>
</feature>
<feature type="binding site" evidence="1">
    <location>
        <position position="476"/>
    </location>
    <ligand>
        <name>substrate</name>
    </ligand>
</feature>
<feature type="binding site" evidence="1">
    <location>
        <position position="601"/>
    </location>
    <ligand>
        <name>substrate</name>
    </ligand>
</feature>
<feature type="binding site" evidence="1">
    <location>
        <begin position="664"/>
        <end position="665"/>
    </location>
    <ligand>
        <name>substrate</name>
    </ligand>
</feature>
<feature type="splice variant" id="VSP_016115" description="In isoform c." evidence="5">
    <location>
        <begin position="1"/>
        <end position="94"/>
    </location>
</feature>